<reference key="1">
    <citation type="journal article" date="1995" name="Virology">
        <title>The DNA sequence of human herpesvirus-6: structure, coding content, and genome evolution.</title>
        <authorList>
            <person name="Gompels U.A."/>
            <person name="Nicholas J."/>
            <person name="Lawrence G.L."/>
            <person name="Jones M."/>
            <person name="Thomson B.J."/>
            <person name="Martin M.E.D."/>
            <person name="Efstathiou S."/>
            <person name="Craxton M.A."/>
            <person name="Macaulay H.A."/>
        </authorList>
    </citation>
    <scope>NUCLEOTIDE SEQUENCE [LARGE SCALE GENOMIC DNA]</scope>
</reference>
<sequence length="860" mass="100080">MTIVVFATEYDAANVIFSILCRSPSEHLIFPIIVKYKPSNNVSFCLQTQKCKNSKRIDTVFVCHAEKLNLSHYIQTASPIKAEDVANSLNDKETESLYVDMILSQTGKEREDVEFKYMAYFHKSLIIKYLTGKFLLPTSPFWFLSTYGQTEGMLLLTMFYYLFEEQKSTITTTKNYVQCFTENTGNMVFTYSSMSEFINITLKSKFRKLFADFSTYARQKNLRDKEEFKHLDTQINLFRKSSHLTNTFRVHYIYIAYNTALETTKFVNYCNLTSYDSNLPIGQQCQRNLHILGNSLHENLLCIMKQYFNADCYFKTYIDIKRLKNPNLNVTEYEYALVSKKKTIQALTSEQITRAIAKCNKNGEGLFSPVKPGLQGLLEISASDRYVQIQDKRIYRRQHLHKDYHRPFPVFRVQLLHKNIFCFGNSEDWYENMGFNRILQYLPDEYISDEALTRAIWLQDTHFLCDDVEKQFYTTRHEIFNERIPVTNYIGDLDLPLQDTATITEETFFSMCRLIRLTLINAWKKIFPSIDTDTHPIFFFKTQCDTTNDTLDYTEDPTEIKQFCVCRKKIGLRISIPLPNGTAIAGGEPLKQLSKILNHVMCLDQELSQILNSITFPGECFDIGIYHTGHCIRIGYMYKTDMDKGKMLHGRLTPIFIVPEGYRNSCKTFIQMQMDLNNLLHHGTKKAPIEELIYNITDKGCPKENLSFMDLKSRQLWNKVNIATETLITKYLNTHGFNNNATSADDSLLSFIRLIGWPIIKTQLITHYETRIAQQFSQVTFIKIDSKNLQIKKTQFGRVSDFSCLNRQHRGNRDNVLVYIQLKADGNRLILILWSTCFATKCQSNSKQVHCSIALEQLKN</sequence>
<dbReference type="EC" id="2.7.7.-" evidence="1"/>
<dbReference type="EMBL" id="X83413">
    <property type="protein sequence ID" value="CAA58377.1"/>
    <property type="molecule type" value="Genomic_DNA"/>
</dbReference>
<dbReference type="EMBL" id="X92436">
    <property type="protein sequence ID" value="CAA63169.1"/>
    <property type="molecule type" value="Genomic_DNA"/>
</dbReference>
<dbReference type="RefSeq" id="NP_042936.1">
    <property type="nucleotide sequence ID" value="NC_001664.2"/>
</dbReference>
<dbReference type="DNASU" id="1487921"/>
<dbReference type="GeneID" id="1487921"/>
<dbReference type="KEGG" id="vg:1487921"/>
<dbReference type="Proteomes" id="UP000009295">
    <property type="component" value="Segment"/>
</dbReference>
<dbReference type="GO" id="GO:0042025">
    <property type="term" value="C:host cell nucleus"/>
    <property type="evidence" value="ECO:0007669"/>
    <property type="project" value="UniProtKB-SubCell"/>
</dbReference>
<dbReference type="GO" id="GO:0003899">
    <property type="term" value="F:DNA-directed RNA polymerase activity"/>
    <property type="evidence" value="ECO:0007669"/>
    <property type="project" value="InterPro"/>
</dbReference>
<dbReference type="GO" id="GO:0008270">
    <property type="term" value="F:zinc ion binding"/>
    <property type="evidence" value="ECO:0007669"/>
    <property type="project" value="UniProtKB-KW"/>
</dbReference>
<dbReference type="GO" id="GO:0039686">
    <property type="term" value="P:bidirectional double-stranded viral DNA replication"/>
    <property type="evidence" value="ECO:0007669"/>
    <property type="project" value="InterPro"/>
</dbReference>
<dbReference type="GO" id="GO:0006260">
    <property type="term" value="P:DNA replication"/>
    <property type="evidence" value="ECO:0007669"/>
    <property type="project" value="UniProtKB-KW"/>
</dbReference>
<dbReference type="HAMAP" id="MF_04011">
    <property type="entry name" value="HSV_PRIM"/>
    <property type="match status" value="1"/>
</dbReference>
<dbReference type="InterPro" id="IPR033685">
    <property type="entry name" value="HSV_PRIM"/>
</dbReference>
<dbReference type="Pfam" id="PF03121">
    <property type="entry name" value="Herpes_UL52"/>
    <property type="match status" value="1"/>
</dbReference>
<keyword id="KW-0235">DNA replication</keyword>
<keyword id="KW-1048">Host nucleus</keyword>
<keyword id="KW-0479">Metal-binding</keyword>
<keyword id="KW-1185">Reference proteome</keyword>
<keyword id="KW-0808">Transferase</keyword>
<keyword id="KW-0862">Zinc</keyword>
<keyword id="KW-0863">Zinc-finger</keyword>
<gene>
    <name type="primary">U43</name>
</gene>
<accession>P52467</accession>
<evidence type="ECO:0000255" key="1">
    <source>
        <dbReference type="HAMAP-Rule" id="MF_04011"/>
    </source>
</evidence>
<proteinExistence type="inferred from homology"/>
<organismHost>
    <name type="scientific">Homo sapiens</name>
    <name type="common">Human</name>
    <dbReference type="NCBI Taxonomy" id="9606"/>
</organismHost>
<organism>
    <name type="scientific">Human herpesvirus 6A (strain Uganda-1102)</name>
    <name type="common">HHV-6 variant A</name>
    <name type="synonym">Human B lymphotropic virus</name>
    <dbReference type="NCBI Taxonomy" id="10370"/>
    <lineage>
        <taxon>Viruses</taxon>
        <taxon>Duplodnaviria</taxon>
        <taxon>Heunggongvirae</taxon>
        <taxon>Peploviricota</taxon>
        <taxon>Herviviricetes</taxon>
        <taxon>Herpesvirales</taxon>
        <taxon>Orthoherpesviridae</taxon>
        <taxon>Betaherpesvirinae</taxon>
        <taxon>Roseolovirus</taxon>
        <taxon>Roseolovirus humanbeta6a</taxon>
        <taxon>Human betaherpesvirus 6A</taxon>
    </lineage>
</organism>
<comment type="function">
    <text evidence="1">Essential component of the helicase/primase complex. Unwinds the DNA at the replication forks and generates single-stranded DNA for both leading and lagging strand synthesis. The primase initiates primer synthesis and thereby produces large amount of short RNA primers on the lagging strand that the polymerase elongates using dNTPs.</text>
</comment>
<comment type="subunit">
    <text evidence="1">Associates with the helicase and the primase-associated factor to form the helicase-primase factor.</text>
</comment>
<comment type="subcellular location">
    <subcellularLocation>
        <location evidence="1">Host nucleus</location>
    </subcellularLocation>
    <text evidence="1">Requires the presence of the primase associated factor to properly localize in the host cell nucleus.</text>
</comment>
<comment type="similarity">
    <text evidence="1">Belongs to the herpesviridae DNA primase family.</text>
</comment>
<protein>
    <recommendedName>
        <fullName evidence="1">DNA primase</fullName>
        <ecNumber evidence="1">2.7.7.-</ecNumber>
    </recommendedName>
</protein>
<name>PRIM_HHV6U</name>
<feature type="chain" id="PRO_0000116108" description="DNA primase">
    <location>
        <begin position="1"/>
        <end position="860"/>
    </location>
</feature>
<feature type="zinc finger region" description="CHC2-type" evidence="1">
    <location>
        <begin position="804"/>
        <end position="842"/>
    </location>
</feature>
<feature type="site" description="Essential for primase activity" evidence="1">
    <location>
        <position position="492"/>
    </location>
</feature>
<feature type="site" description="Essential for primase activity" evidence="1">
    <location>
        <position position="494"/>
    </location>
</feature>